<protein>
    <recommendedName>
        <fullName evidence="1">4-hydroxybenzoate octaprenyltransferase</fullName>
        <ecNumber evidence="1">2.5.1.39</ecNumber>
    </recommendedName>
    <alternativeName>
        <fullName evidence="1">4-HB polyprenyltransferase</fullName>
    </alternativeName>
</protein>
<evidence type="ECO:0000255" key="1">
    <source>
        <dbReference type="HAMAP-Rule" id="MF_01635"/>
    </source>
</evidence>
<keyword id="KW-0997">Cell inner membrane</keyword>
<keyword id="KW-1003">Cell membrane</keyword>
<keyword id="KW-0460">Magnesium</keyword>
<keyword id="KW-0472">Membrane</keyword>
<keyword id="KW-0808">Transferase</keyword>
<keyword id="KW-0812">Transmembrane</keyword>
<keyword id="KW-1133">Transmembrane helix</keyword>
<keyword id="KW-0831">Ubiquinone biosynthesis</keyword>
<comment type="function">
    <text evidence="1">Catalyzes the prenylation of para-hydroxybenzoate (PHB) with an all-trans polyprenyl group. Mediates the second step in the final reaction sequence of ubiquinone-8 (UQ-8) biosynthesis, which is the condensation of the polyisoprenoid side chain with PHB, generating the first membrane-bound Q intermediate 3-octaprenyl-4-hydroxybenzoate.</text>
</comment>
<comment type="catalytic activity">
    <reaction evidence="1">
        <text>all-trans-octaprenyl diphosphate + 4-hydroxybenzoate = 4-hydroxy-3-(all-trans-octaprenyl)benzoate + diphosphate</text>
        <dbReference type="Rhea" id="RHEA:27782"/>
        <dbReference type="ChEBI" id="CHEBI:1617"/>
        <dbReference type="ChEBI" id="CHEBI:17879"/>
        <dbReference type="ChEBI" id="CHEBI:33019"/>
        <dbReference type="ChEBI" id="CHEBI:57711"/>
        <dbReference type="EC" id="2.5.1.39"/>
    </reaction>
</comment>
<comment type="cofactor">
    <cofactor evidence="1">
        <name>Mg(2+)</name>
        <dbReference type="ChEBI" id="CHEBI:18420"/>
    </cofactor>
</comment>
<comment type="pathway">
    <text evidence="1">Cofactor biosynthesis; ubiquinone biosynthesis.</text>
</comment>
<comment type="subcellular location">
    <subcellularLocation>
        <location evidence="1">Cell inner membrane</location>
        <topology evidence="1">Multi-pass membrane protein</topology>
    </subcellularLocation>
</comment>
<comment type="similarity">
    <text evidence="1">Belongs to the UbiA prenyltransferase family.</text>
</comment>
<organism>
    <name type="scientific">Escherichia coli O7:K1 (strain IAI39 / ExPEC)</name>
    <dbReference type="NCBI Taxonomy" id="585057"/>
    <lineage>
        <taxon>Bacteria</taxon>
        <taxon>Pseudomonadati</taxon>
        <taxon>Pseudomonadota</taxon>
        <taxon>Gammaproteobacteria</taxon>
        <taxon>Enterobacterales</taxon>
        <taxon>Enterobacteriaceae</taxon>
        <taxon>Escherichia</taxon>
    </lineage>
</organism>
<feature type="chain" id="PRO_1000186667" description="4-hydroxybenzoate octaprenyltransferase">
    <location>
        <begin position="1"/>
        <end position="290"/>
    </location>
</feature>
<feature type="transmembrane region" description="Helical" evidence="1">
    <location>
        <begin position="23"/>
        <end position="43"/>
    </location>
</feature>
<feature type="transmembrane region" description="Helical" evidence="1">
    <location>
        <begin position="46"/>
        <end position="66"/>
    </location>
</feature>
<feature type="transmembrane region" description="Helical" evidence="1">
    <location>
        <begin position="99"/>
        <end position="119"/>
    </location>
</feature>
<feature type="transmembrane region" description="Helical" evidence="1">
    <location>
        <begin position="141"/>
        <end position="161"/>
    </location>
</feature>
<feature type="transmembrane region" description="Helical" evidence="1">
    <location>
        <begin position="163"/>
        <end position="183"/>
    </location>
</feature>
<feature type="transmembrane region" description="Helical" evidence="1">
    <location>
        <begin position="213"/>
        <end position="233"/>
    </location>
</feature>
<feature type="transmembrane region" description="Helical" evidence="1">
    <location>
        <begin position="234"/>
        <end position="254"/>
    </location>
</feature>
<feature type="transmembrane region" description="Helical" evidence="1">
    <location>
        <begin position="268"/>
        <end position="288"/>
    </location>
</feature>
<sequence>MEWSLTQNKLLAFHRLMRTDKPIGALLLLWPTLWALWVATPGVPQLWILAVFVAGVWLMRAAGCVVNDYADRKFDGHVKRTANRPLPSGAVTEKEARALFVVLVLISFLLVLTLNTMTILLSIAALALAWVYPFMKRYTHLPQVVLGAAFGWSIPMAFAAVSESVPLSCWLMFLANILWAVAYDTQYAMVDRDDDVKIGIKSTAILFGQYDKLIIGILQIGVLALMAIIGELNGLGWGYYWSILVAGALFVYQQKLIANREREACFKAFMNNNYVGLVLFLGLAMSYWHF</sequence>
<reference key="1">
    <citation type="journal article" date="2009" name="PLoS Genet.">
        <title>Organised genome dynamics in the Escherichia coli species results in highly diverse adaptive paths.</title>
        <authorList>
            <person name="Touchon M."/>
            <person name="Hoede C."/>
            <person name="Tenaillon O."/>
            <person name="Barbe V."/>
            <person name="Baeriswyl S."/>
            <person name="Bidet P."/>
            <person name="Bingen E."/>
            <person name="Bonacorsi S."/>
            <person name="Bouchier C."/>
            <person name="Bouvet O."/>
            <person name="Calteau A."/>
            <person name="Chiapello H."/>
            <person name="Clermont O."/>
            <person name="Cruveiller S."/>
            <person name="Danchin A."/>
            <person name="Diard M."/>
            <person name="Dossat C."/>
            <person name="Karoui M.E."/>
            <person name="Frapy E."/>
            <person name="Garry L."/>
            <person name="Ghigo J.M."/>
            <person name="Gilles A.M."/>
            <person name="Johnson J."/>
            <person name="Le Bouguenec C."/>
            <person name="Lescat M."/>
            <person name="Mangenot S."/>
            <person name="Martinez-Jehanne V."/>
            <person name="Matic I."/>
            <person name="Nassif X."/>
            <person name="Oztas S."/>
            <person name="Petit M.A."/>
            <person name="Pichon C."/>
            <person name="Rouy Z."/>
            <person name="Ruf C.S."/>
            <person name="Schneider D."/>
            <person name="Tourret J."/>
            <person name="Vacherie B."/>
            <person name="Vallenet D."/>
            <person name="Medigue C."/>
            <person name="Rocha E.P.C."/>
            <person name="Denamur E."/>
        </authorList>
    </citation>
    <scope>NUCLEOTIDE SEQUENCE [LARGE SCALE GENOMIC DNA]</scope>
    <source>
        <strain>IAI39 / ExPEC</strain>
    </source>
</reference>
<dbReference type="EC" id="2.5.1.39" evidence="1"/>
<dbReference type="EMBL" id="CU928164">
    <property type="protein sequence ID" value="CAR20567.1"/>
    <property type="molecule type" value="Genomic_DNA"/>
</dbReference>
<dbReference type="RefSeq" id="WP_000455227.1">
    <property type="nucleotide sequence ID" value="NC_011750.1"/>
</dbReference>
<dbReference type="RefSeq" id="YP_002410334.1">
    <property type="nucleotide sequence ID" value="NC_011750.1"/>
</dbReference>
<dbReference type="SMR" id="B7NS04"/>
<dbReference type="STRING" id="585057.ECIAI39_4461"/>
<dbReference type="GeneID" id="93777791"/>
<dbReference type="KEGG" id="ect:ECIAI39_4461"/>
<dbReference type="PATRIC" id="fig|585057.6.peg.4607"/>
<dbReference type="HOGENOM" id="CLU_034879_1_0_6"/>
<dbReference type="UniPathway" id="UPA00232"/>
<dbReference type="Proteomes" id="UP000000749">
    <property type="component" value="Chromosome"/>
</dbReference>
<dbReference type="GO" id="GO:0005886">
    <property type="term" value="C:plasma membrane"/>
    <property type="evidence" value="ECO:0007669"/>
    <property type="project" value="UniProtKB-SubCell"/>
</dbReference>
<dbReference type="GO" id="GO:0008412">
    <property type="term" value="F:4-hydroxybenzoate polyprenyltransferase activity"/>
    <property type="evidence" value="ECO:0007669"/>
    <property type="project" value="UniProtKB-UniRule"/>
</dbReference>
<dbReference type="GO" id="GO:0006744">
    <property type="term" value="P:ubiquinone biosynthetic process"/>
    <property type="evidence" value="ECO:0007669"/>
    <property type="project" value="UniProtKB-UniRule"/>
</dbReference>
<dbReference type="CDD" id="cd13959">
    <property type="entry name" value="PT_UbiA_COQ2"/>
    <property type="match status" value="1"/>
</dbReference>
<dbReference type="FunFam" id="1.10.357.140:FF:000002">
    <property type="entry name" value="4-hydroxybenzoate octaprenyltransferase"/>
    <property type="match status" value="1"/>
</dbReference>
<dbReference type="FunFam" id="1.20.120.1780:FF:000001">
    <property type="entry name" value="4-hydroxybenzoate octaprenyltransferase"/>
    <property type="match status" value="1"/>
</dbReference>
<dbReference type="Gene3D" id="1.10.357.140">
    <property type="entry name" value="UbiA prenyltransferase"/>
    <property type="match status" value="1"/>
</dbReference>
<dbReference type="Gene3D" id="1.20.120.1780">
    <property type="entry name" value="UbiA prenyltransferase"/>
    <property type="match status" value="1"/>
</dbReference>
<dbReference type="HAMAP" id="MF_01635">
    <property type="entry name" value="UbiA"/>
    <property type="match status" value="1"/>
</dbReference>
<dbReference type="InterPro" id="IPR006370">
    <property type="entry name" value="HB_polyprenyltransferase-like"/>
</dbReference>
<dbReference type="InterPro" id="IPR039653">
    <property type="entry name" value="Prenyltransferase"/>
</dbReference>
<dbReference type="InterPro" id="IPR000537">
    <property type="entry name" value="UbiA_prenyltransferase"/>
</dbReference>
<dbReference type="InterPro" id="IPR030470">
    <property type="entry name" value="UbiA_prenylTrfase_CS"/>
</dbReference>
<dbReference type="InterPro" id="IPR044878">
    <property type="entry name" value="UbiA_sf"/>
</dbReference>
<dbReference type="NCBIfam" id="TIGR01474">
    <property type="entry name" value="ubiA_proteo"/>
    <property type="match status" value="1"/>
</dbReference>
<dbReference type="PANTHER" id="PTHR11048:SF28">
    <property type="entry name" value="4-HYDROXYBENZOATE POLYPRENYLTRANSFERASE, MITOCHONDRIAL"/>
    <property type="match status" value="1"/>
</dbReference>
<dbReference type="PANTHER" id="PTHR11048">
    <property type="entry name" value="PRENYLTRANSFERASES"/>
    <property type="match status" value="1"/>
</dbReference>
<dbReference type="Pfam" id="PF01040">
    <property type="entry name" value="UbiA"/>
    <property type="match status" value="1"/>
</dbReference>
<dbReference type="PROSITE" id="PS00943">
    <property type="entry name" value="UBIA"/>
    <property type="match status" value="1"/>
</dbReference>
<accession>B7NS04</accession>
<proteinExistence type="inferred from homology"/>
<name>UBIA_ECO7I</name>
<gene>
    <name evidence="1" type="primary">ubiA</name>
    <name type="ordered locus">ECIAI39_4461</name>
</gene>